<proteinExistence type="inferred from homology"/>
<name>CYAY_PARP8</name>
<keyword id="KW-0408">Iron</keyword>
<keyword id="KW-0479">Metal-binding</keyword>
<keyword id="KW-1185">Reference proteome</keyword>
<reference key="1">
    <citation type="journal article" date="2014" name="Stand. Genomic Sci.">
        <title>Complete genome sequence of Burkholderia phymatum STM815(T), a broad host range and efficient nitrogen-fixing symbiont of Mimosa species.</title>
        <authorList>
            <person name="Moulin L."/>
            <person name="Klonowska A."/>
            <person name="Caroline B."/>
            <person name="Booth K."/>
            <person name="Vriezen J.A."/>
            <person name="Melkonian R."/>
            <person name="James E.K."/>
            <person name="Young J.P."/>
            <person name="Bena G."/>
            <person name="Hauser L."/>
            <person name="Land M."/>
            <person name="Kyrpides N."/>
            <person name="Bruce D."/>
            <person name="Chain P."/>
            <person name="Copeland A."/>
            <person name="Pitluck S."/>
            <person name="Woyke T."/>
            <person name="Lizotte-Waniewski M."/>
            <person name="Bristow J."/>
            <person name="Riley M."/>
        </authorList>
    </citation>
    <scope>NUCLEOTIDE SEQUENCE [LARGE SCALE GENOMIC DNA]</scope>
    <source>
        <strain>DSM 17167 / CIP 108236 / LMG 21445 / STM815</strain>
    </source>
</reference>
<dbReference type="EMBL" id="CP001043">
    <property type="protein sequence ID" value="ACC71972.1"/>
    <property type="molecule type" value="Genomic_DNA"/>
</dbReference>
<dbReference type="RefSeq" id="WP_012402169.1">
    <property type="nucleotide sequence ID" value="NC_010622.1"/>
</dbReference>
<dbReference type="SMR" id="B2JI26"/>
<dbReference type="STRING" id="391038.Bphy_2800"/>
<dbReference type="KEGG" id="bph:Bphy_2800"/>
<dbReference type="eggNOG" id="COG1965">
    <property type="taxonomic scope" value="Bacteria"/>
</dbReference>
<dbReference type="HOGENOM" id="CLU_080880_3_0_4"/>
<dbReference type="OrthoDB" id="285675at2"/>
<dbReference type="Proteomes" id="UP000001192">
    <property type="component" value="Chromosome 1"/>
</dbReference>
<dbReference type="GO" id="GO:0005829">
    <property type="term" value="C:cytosol"/>
    <property type="evidence" value="ECO:0007669"/>
    <property type="project" value="TreeGrafter"/>
</dbReference>
<dbReference type="GO" id="GO:0008199">
    <property type="term" value="F:ferric iron binding"/>
    <property type="evidence" value="ECO:0007669"/>
    <property type="project" value="InterPro"/>
</dbReference>
<dbReference type="GO" id="GO:0008198">
    <property type="term" value="F:ferrous iron binding"/>
    <property type="evidence" value="ECO:0007669"/>
    <property type="project" value="TreeGrafter"/>
</dbReference>
<dbReference type="GO" id="GO:0016226">
    <property type="term" value="P:iron-sulfur cluster assembly"/>
    <property type="evidence" value="ECO:0007669"/>
    <property type="project" value="UniProtKB-UniRule"/>
</dbReference>
<dbReference type="CDD" id="cd00503">
    <property type="entry name" value="Frataxin"/>
    <property type="match status" value="1"/>
</dbReference>
<dbReference type="Gene3D" id="3.30.920.10">
    <property type="entry name" value="Frataxin/CyaY"/>
    <property type="match status" value="1"/>
</dbReference>
<dbReference type="HAMAP" id="MF_00142">
    <property type="entry name" value="CyaY"/>
    <property type="match status" value="1"/>
</dbReference>
<dbReference type="InterPro" id="IPR047584">
    <property type="entry name" value="CyaY"/>
</dbReference>
<dbReference type="InterPro" id="IPR002908">
    <property type="entry name" value="Frataxin/CyaY"/>
</dbReference>
<dbReference type="InterPro" id="IPR036524">
    <property type="entry name" value="Frataxin/CyaY_sf"/>
</dbReference>
<dbReference type="InterPro" id="IPR020895">
    <property type="entry name" value="Frataxin_CS"/>
</dbReference>
<dbReference type="NCBIfam" id="TIGR03421">
    <property type="entry name" value="FeS_CyaY"/>
    <property type="match status" value="1"/>
</dbReference>
<dbReference type="PANTHER" id="PTHR16821">
    <property type="entry name" value="FRATAXIN"/>
    <property type="match status" value="1"/>
</dbReference>
<dbReference type="PANTHER" id="PTHR16821:SF2">
    <property type="entry name" value="FRATAXIN, MITOCHONDRIAL"/>
    <property type="match status" value="1"/>
</dbReference>
<dbReference type="Pfam" id="PF01491">
    <property type="entry name" value="Frataxin_Cyay"/>
    <property type="match status" value="1"/>
</dbReference>
<dbReference type="SMART" id="SM01219">
    <property type="entry name" value="Frataxin_Cyay"/>
    <property type="match status" value="1"/>
</dbReference>
<dbReference type="SUPFAM" id="SSF55387">
    <property type="entry name" value="Frataxin/Nqo15-like"/>
    <property type="match status" value="1"/>
</dbReference>
<dbReference type="PROSITE" id="PS01344">
    <property type="entry name" value="FRATAXIN_1"/>
    <property type="match status" value="1"/>
</dbReference>
<dbReference type="PROSITE" id="PS50810">
    <property type="entry name" value="FRATAXIN_2"/>
    <property type="match status" value="1"/>
</dbReference>
<feature type="chain" id="PRO_1000096239" description="Iron-sulfur cluster assembly protein CyaY">
    <location>
        <begin position="1"/>
        <end position="105"/>
    </location>
</feature>
<organism>
    <name type="scientific">Paraburkholderia phymatum (strain DSM 17167 / CIP 108236 / LMG 21445 / STM815)</name>
    <name type="common">Burkholderia phymatum</name>
    <dbReference type="NCBI Taxonomy" id="391038"/>
    <lineage>
        <taxon>Bacteria</taxon>
        <taxon>Pseudomonadati</taxon>
        <taxon>Pseudomonadota</taxon>
        <taxon>Betaproteobacteria</taxon>
        <taxon>Burkholderiales</taxon>
        <taxon>Burkholderiaceae</taxon>
        <taxon>Paraburkholderia</taxon>
    </lineage>
</organism>
<accession>B2JI26</accession>
<gene>
    <name evidence="1" type="primary">cyaY</name>
    <name type="ordered locus">Bphy_2800</name>
</gene>
<evidence type="ECO:0000255" key="1">
    <source>
        <dbReference type="HAMAP-Rule" id="MF_00142"/>
    </source>
</evidence>
<comment type="function">
    <text evidence="1">Involved in iron-sulfur (Fe-S) cluster assembly. May act as a regulator of Fe-S biogenesis.</text>
</comment>
<comment type="similarity">
    <text evidence="1">Belongs to the frataxin family.</text>
</comment>
<protein>
    <recommendedName>
        <fullName evidence="1">Iron-sulfur cluster assembly protein CyaY</fullName>
    </recommendedName>
</protein>
<sequence length="105" mass="11746">MSDSEYLTRAEAVLAAIERSLDDADADIEFERSGNVLTLEFENGTKIIVNLQPPMQEIWIAAKSGGYHFRFVDGEWRDTRNGTEFYAALSEYATQQAGEPVEIAP</sequence>